<proteinExistence type="inferred from homology"/>
<protein>
    <recommendedName>
        <fullName evidence="1">tRNA uridine 5-carboxymethylaminomethyl modification enzyme MnmG</fullName>
    </recommendedName>
    <alternativeName>
        <fullName evidence="1">Glucose-inhibited division protein A</fullName>
    </alternativeName>
</protein>
<reference key="1">
    <citation type="journal article" date="2006" name="Appl. Environ. Microbiol.">
        <title>Complete genome sequence of the marine, chemolithoautotrophic, ammonia-oxidizing bacterium Nitrosococcus oceani ATCC 19707.</title>
        <authorList>
            <person name="Klotz M.G."/>
            <person name="Arp D.J."/>
            <person name="Chain P.S.G."/>
            <person name="El-Sheikh A.F."/>
            <person name="Hauser L.J."/>
            <person name="Hommes N.G."/>
            <person name="Larimer F.W."/>
            <person name="Malfatti S.A."/>
            <person name="Norton J.M."/>
            <person name="Poret-Peterson A.T."/>
            <person name="Vergez L.M."/>
            <person name="Ward B.B."/>
        </authorList>
    </citation>
    <scope>NUCLEOTIDE SEQUENCE [LARGE SCALE GENOMIC DNA]</scope>
    <source>
        <strain>ATCC 19707 / BCRC 17464 / JCM 30415 / NCIMB 11848 / C-107</strain>
    </source>
</reference>
<keyword id="KW-0963">Cytoplasm</keyword>
<keyword id="KW-0274">FAD</keyword>
<keyword id="KW-0285">Flavoprotein</keyword>
<keyword id="KW-0520">NAD</keyword>
<keyword id="KW-1185">Reference proteome</keyword>
<keyword id="KW-0819">tRNA processing</keyword>
<name>MNMG_NITOC</name>
<accession>Q3J6M0</accession>
<gene>
    <name evidence="1" type="primary">mnmG</name>
    <name evidence="1" type="synonym">gidA</name>
    <name type="ordered locus">Noc_3085</name>
</gene>
<organism>
    <name type="scientific">Nitrosococcus oceani (strain ATCC 19707 / BCRC 17464 / JCM 30415 / NCIMB 11848 / C-107)</name>
    <dbReference type="NCBI Taxonomy" id="323261"/>
    <lineage>
        <taxon>Bacteria</taxon>
        <taxon>Pseudomonadati</taxon>
        <taxon>Pseudomonadota</taxon>
        <taxon>Gammaproteobacteria</taxon>
        <taxon>Chromatiales</taxon>
        <taxon>Chromatiaceae</taxon>
        <taxon>Nitrosococcus</taxon>
    </lineage>
</organism>
<dbReference type="EMBL" id="CP000127">
    <property type="protein sequence ID" value="ABA59526.1"/>
    <property type="molecule type" value="Genomic_DNA"/>
</dbReference>
<dbReference type="RefSeq" id="WP_002814315.1">
    <property type="nucleotide sequence ID" value="NC_007484.1"/>
</dbReference>
<dbReference type="SMR" id="Q3J6M0"/>
<dbReference type="FunCoup" id="Q3J6M0">
    <property type="interactions" value="586"/>
</dbReference>
<dbReference type="STRING" id="323261.Noc_3085"/>
<dbReference type="KEGG" id="noc:Noc_3085"/>
<dbReference type="eggNOG" id="COG0445">
    <property type="taxonomic scope" value="Bacteria"/>
</dbReference>
<dbReference type="HOGENOM" id="CLU_007831_2_2_6"/>
<dbReference type="InParanoid" id="Q3J6M0"/>
<dbReference type="Proteomes" id="UP000006838">
    <property type="component" value="Chromosome"/>
</dbReference>
<dbReference type="GO" id="GO:0005829">
    <property type="term" value="C:cytosol"/>
    <property type="evidence" value="ECO:0007669"/>
    <property type="project" value="TreeGrafter"/>
</dbReference>
<dbReference type="GO" id="GO:0050660">
    <property type="term" value="F:flavin adenine dinucleotide binding"/>
    <property type="evidence" value="ECO:0007669"/>
    <property type="project" value="UniProtKB-UniRule"/>
</dbReference>
<dbReference type="GO" id="GO:0030488">
    <property type="term" value="P:tRNA methylation"/>
    <property type="evidence" value="ECO:0007669"/>
    <property type="project" value="TreeGrafter"/>
</dbReference>
<dbReference type="GO" id="GO:0002098">
    <property type="term" value="P:tRNA wobble uridine modification"/>
    <property type="evidence" value="ECO:0007669"/>
    <property type="project" value="InterPro"/>
</dbReference>
<dbReference type="FunFam" id="1.10.10.1800:FF:000001">
    <property type="entry name" value="tRNA uridine 5-carboxymethylaminomethyl modification enzyme MnmG"/>
    <property type="match status" value="1"/>
</dbReference>
<dbReference type="FunFam" id="1.10.150.570:FF:000001">
    <property type="entry name" value="tRNA uridine 5-carboxymethylaminomethyl modification enzyme MnmG"/>
    <property type="match status" value="1"/>
</dbReference>
<dbReference type="FunFam" id="3.50.50.60:FF:000002">
    <property type="entry name" value="tRNA uridine 5-carboxymethylaminomethyl modification enzyme MnmG"/>
    <property type="match status" value="1"/>
</dbReference>
<dbReference type="FunFam" id="3.50.50.60:FF:000010">
    <property type="entry name" value="tRNA uridine 5-carboxymethylaminomethyl modification enzyme MnmG"/>
    <property type="match status" value="1"/>
</dbReference>
<dbReference type="Gene3D" id="3.50.50.60">
    <property type="entry name" value="FAD/NAD(P)-binding domain"/>
    <property type="match status" value="2"/>
</dbReference>
<dbReference type="Gene3D" id="1.10.150.570">
    <property type="entry name" value="GidA associated domain, C-terminal subdomain"/>
    <property type="match status" value="1"/>
</dbReference>
<dbReference type="Gene3D" id="1.10.10.1800">
    <property type="entry name" value="tRNA uridine 5-carboxymethylaminomethyl modification enzyme MnmG/GidA"/>
    <property type="match status" value="1"/>
</dbReference>
<dbReference type="HAMAP" id="MF_00129">
    <property type="entry name" value="MnmG_GidA"/>
    <property type="match status" value="1"/>
</dbReference>
<dbReference type="InterPro" id="IPR036188">
    <property type="entry name" value="FAD/NAD-bd_sf"/>
</dbReference>
<dbReference type="InterPro" id="IPR049312">
    <property type="entry name" value="GIDA_C_N"/>
</dbReference>
<dbReference type="InterPro" id="IPR004416">
    <property type="entry name" value="MnmG"/>
</dbReference>
<dbReference type="InterPro" id="IPR002218">
    <property type="entry name" value="MnmG-rel"/>
</dbReference>
<dbReference type="InterPro" id="IPR020595">
    <property type="entry name" value="MnmG-rel_CS"/>
</dbReference>
<dbReference type="InterPro" id="IPR026904">
    <property type="entry name" value="MnmG_C"/>
</dbReference>
<dbReference type="InterPro" id="IPR047001">
    <property type="entry name" value="MnmG_C_subdom"/>
</dbReference>
<dbReference type="InterPro" id="IPR044920">
    <property type="entry name" value="MnmG_C_subdom_sf"/>
</dbReference>
<dbReference type="InterPro" id="IPR040131">
    <property type="entry name" value="MnmG_N"/>
</dbReference>
<dbReference type="NCBIfam" id="TIGR00136">
    <property type="entry name" value="mnmG_gidA"/>
    <property type="match status" value="1"/>
</dbReference>
<dbReference type="PANTHER" id="PTHR11806">
    <property type="entry name" value="GLUCOSE INHIBITED DIVISION PROTEIN A"/>
    <property type="match status" value="1"/>
</dbReference>
<dbReference type="PANTHER" id="PTHR11806:SF0">
    <property type="entry name" value="PROTEIN MTO1 HOMOLOG, MITOCHONDRIAL"/>
    <property type="match status" value="1"/>
</dbReference>
<dbReference type="Pfam" id="PF01134">
    <property type="entry name" value="GIDA"/>
    <property type="match status" value="1"/>
</dbReference>
<dbReference type="Pfam" id="PF21680">
    <property type="entry name" value="GIDA_C_1st"/>
    <property type="match status" value="1"/>
</dbReference>
<dbReference type="Pfam" id="PF13932">
    <property type="entry name" value="SAM_GIDA_C"/>
    <property type="match status" value="1"/>
</dbReference>
<dbReference type="SMART" id="SM01228">
    <property type="entry name" value="GIDA_assoc_3"/>
    <property type="match status" value="1"/>
</dbReference>
<dbReference type="SUPFAM" id="SSF51905">
    <property type="entry name" value="FAD/NAD(P)-binding domain"/>
    <property type="match status" value="1"/>
</dbReference>
<dbReference type="PROSITE" id="PS01280">
    <property type="entry name" value="GIDA_1"/>
    <property type="match status" value="1"/>
</dbReference>
<dbReference type="PROSITE" id="PS01281">
    <property type="entry name" value="GIDA_2"/>
    <property type="match status" value="1"/>
</dbReference>
<feature type="chain" id="PRO_1000016628" description="tRNA uridine 5-carboxymethylaminomethyl modification enzyme MnmG">
    <location>
        <begin position="1"/>
        <end position="629"/>
    </location>
</feature>
<feature type="binding site" evidence="1">
    <location>
        <begin position="13"/>
        <end position="18"/>
    </location>
    <ligand>
        <name>FAD</name>
        <dbReference type="ChEBI" id="CHEBI:57692"/>
    </ligand>
</feature>
<feature type="binding site" evidence="1">
    <location>
        <begin position="273"/>
        <end position="287"/>
    </location>
    <ligand>
        <name>NAD(+)</name>
        <dbReference type="ChEBI" id="CHEBI:57540"/>
    </ligand>
</feature>
<comment type="function">
    <text evidence="1">NAD-binding protein involved in the addition of a carboxymethylaminomethyl (cmnm) group at the wobble position (U34) of certain tRNAs, forming tRNA-cmnm(5)s(2)U34.</text>
</comment>
<comment type="cofactor">
    <cofactor evidence="1">
        <name>FAD</name>
        <dbReference type="ChEBI" id="CHEBI:57692"/>
    </cofactor>
</comment>
<comment type="subunit">
    <text evidence="1">Homodimer. Heterotetramer of two MnmE and two MnmG subunits.</text>
</comment>
<comment type="subcellular location">
    <subcellularLocation>
        <location evidence="1">Cytoplasm</location>
    </subcellularLocation>
</comment>
<comment type="similarity">
    <text evidence="1">Belongs to the MnmG family.</text>
</comment>
<sequence>MSVFYQYEVIVVGGGHAGTEAALAAARQGVRTLLLTHNIETLGQMSCNPAIGGIGKGHLVKEIDALGGLMAQAADQAGIHFRMLNARKGPAVRATRAQADRALYKAVVRKALEQQSCLSLFQQAVTDLVVKGERVVGVRTQLGLTFYAPAVVLTVGTFLGGRIHVGLTNHEGGRAGDPPANILSSRLRELPFRVARLKTGTPPRIDGRSIDYSQLEVQPGDDPVPVFSFLGSAEDHPQQVSCHITRTNLCTHEIIRASLDRSPIYSGEIEGIGPRYCPSIEDKVVRFSDKASHQIFIEPEGLETFEIYPNGISTSLPFDVQVALVRSIQGFEQAHITRPGYAIEYDFFDPRDLKPSLETSFLQGLYFAGQINGTTGYEEAAAQGLIAGLNAGLQVQEKEPWYPRRDEAYIGVLIDDLITCGTSEPYRMFTSRAEYRLLLREDNADLRLTPIGRELRVVDEVRWRRFNTKWKAIERENQRLVQQRIEPDKVSEGEAVTLLGEPLRREYRLIELLRRPHISYEKLMRLIGEPMAVEPAVAEQIAIQAKYAGYIERQQLEIARQQRHESLRLPLDLNYHQVRGLSVEVQEKLARVQPATLGQATRIPGVTPAAISLLLVYLKRARFLEETGV</sequence>
<evidence type="ECO:0000255" key="1">
    <source>
        <dbReference type="HAMAP-Rule" id="MF_00129"/>
    </source>
</evidence>